<sequence length="142" mass="15965">MNKTQVPSLITSQSWYVIDAKNQKLGRMSTHISNILRGKNKPSYTPYLDTGDYVIVINSSEVSVSGNKTTQKLYRRHSGQPGGLKVETFEQLQTRLPNRIVEKSVKGMLPKGPLGRKLFTKLKVYPGPSHPHAAQKPQEYMV</sequence>
<name>RK13_PORPU</name>
<keyword id="KW-0150">Chloroplast</keyword>
<keyword id="KW-0934">Plastid</keyword>
<keyword id="KW-0687">Ribonucleoprotein</keyword>
<keyword id="KW-0689">Ribosomal protein</keyword>
<accession>P51292</accession>
<comment type="subunit">
    <text evidence="1">Part of the 50S ribosomal subunit.</text>
</comment>
<comment type="subcellular location">
    <subcellularLocation>
        <location>Plastid</location>
        <location>Chloroplast</location>
    </subcellularLocation>
</comment>
<comment type="similarity">
    <text evidence="1">Belongs to the universal ribosomal protein uL13 family.</text>
</comment>
<reference key="1">
    <citation type="journal article" date="1995" name="Plant Mol. Biol. Rep.">
        <title>Complete nucleotide sequence of the Porphyra purpurea chloroplast genome.</title>
        <authorList>
            <person name="Reith M.E."/>
            <person name="Munholland J."/>
        </authorList>
    </citation>
    <scope>NUCLEOTIDE SEQUENCE [LARGE SCALE GENOMIC DNA]</scope>
    <source>
        <strain>Avonport</strain>
    </source>
</reference>
<dbReference type="EMBL" id="U38804">
    <property type="protein sequence ID" value="AAC08178.1"/>
    <property type="molecule type" value="Genomic_DNA"/>
</dbReference>
<dbReference type="PIR" id="S73213">
    <property type="entry name" value="S73213"/>
</dbReference>
<dbReference type="RefSeq" id="NP_053902.1">
    <property type="nucleotide sequence ID" value="NC_000925.1"/>
</dbReference>
<dbReference type="SMR" id="P51292"/>
<dbReference type="GeneID" id="809921"/>
<dbReference type="GO" id="GO:0009507">
    <property type="term" value="C:chloroplast"/>
    <property type="evidence" value="ECO:0007669"/>
    <property type="project" value="UniProtKB-SubCell"/>
</dbReference>
<dbReference type="GO" id="GO:0022625">
    <property type="term" value="C:cytosolic large ribosomal subunit"/>
    <property type="evidence" value="ECO:0007669"/>
    <property type="project" value="TreeGrafter"/>
</dbReference>
<dbReference type="GO" id="GO:0003729">
    <property type="term" value="F:mRNA binding"/>
    <property type="evidence" value="ECO:0007669"/>
    <property type="project" value="TreeGrafter"/>
</dbReference>
<dbReference type="GO" id="GO:0003735">
    <property type="term" value="F:structural constituent of ribosome"/>
    <property type="evidence" value="ECO:0007669"/>
    <property type="project" value="InterPro"/>
</dbReference>
<dbReference type="GO" id="GO:0017148">
    <property type="term" value="P:negative regulation of translation"/>
    <property type="evidence" value="ECO:0007669"/>
    <property type="project" value="TreeGrafter"/>
</dbReference>
<dbReference type="GO" id="GO:0006412">
    <property type="term" value="P:translation"/>
    <property type="evidence" value="ECO:0007669"/>
    <property type="project" value="UniProtKB-UniRule"/>
</dbReference>
<dbReference type="CDD" id="cd00392">
    <property type="entry name" value="Ribosomal_L13"/>
    <property type="match status" value="1"/>
</dbReference>
<dbReference type="FunFam" id="3.90.1180.10:FF:000001">
    <property type="entry name" value="50S ribosomal protein L13"/>
    <property type="match status" value="1"/>
</dbReference>
<dbReference type="Gene3D" id="3.90.1180.10">
    <property type="entry name" value="Ribosomal protein L13"/>
    <property type="match status" value="1"/>
</dbReference>
<dbReference type="HAMAP" id="MF_01366">
    <property type="entry name" value="Ribosomal_uL13"/>
    <property type="match status" value="1"/>
</dbReference>
<dbReference type="InterPro" id="IPR005822">
    <property type="entry name" value="Ribosomal_uL13"/>
</dbReference>
<dbReference type="InterPro" id="IPR005823">
    <property type="entry name" value="Ribosomal_uL13_bac-type"/>
</dbReference>
<dbReference type="InterPro" id="IPR023563">
    <property type="entry name" value="Ribosomal_uL13_CS"/>
</dbReference>
<dbReference type="InterPro" id="IPR036899">
    <property type="entry name" value="Ribosomal_uL13_sf"/>
</dbReference>
<dbReference type="NCBIfam" id="TIGR01066">
    <property type="entry name" value="rplM_bact"/>
    <property type="match status" value="1"/>
</dbReference>
<dbReference type="PANTHER" id="PTHR11545:SF2">
    <property type="entry name" value="LARGE RIBOSOMAL SUBUNIT PROTEIN UL13M"/>
    <property type="match status" value="1"/>
</dbReference>
<dbReference type="PANTHER" id="PTHR11545">
    <property type="entry name" value="RIBOSOMAL PROTEIN L13"/>
    <property type="match status" value="1"/>
</dbReference>
<dbReference type="Pfam" id="PF00572">
    <property type="entry name" value="Ribosomal_L13"/>
    <property type="match status" value="1"/>
</dbReference>
<dbReference type="PIRSF" id="PIRSF002181">
    <property type="entry name" value="Ribosomal_L13"/>
    <property type="match status" value="1"/>
</dbReference>
<dbReference type="SUPFAM" id="SSF52161">
    <property type="entry name" value="Ribosomal protein L13"/>
    <property type="match status" value="1"/>
</dbReference>
<dbReference type="PROSITE" id="PS00783">
    <property type="entry name" value="RIBOSOMAL_L13"/>
    <property type="match status" value="1"/>
</dbReference>
<evidence type="ECO:0000255" key="1">
    <source>
        <dbReference type="HAMAP-Rule" id="MF_01366"/>
    </source>
</evidence>
<evidence type="ECO:0000305" key="2"/>
<protein>
    <recommendedName>
        <fullName evidence="1">Large ribosomal subunit protein uL13c</fullName>
    </recommendedName>
    <alternativeName>
        <fullName evidence="2">50S ribosomal protein L13, chloroplastic</fullName>
    </alternativeName>
</protein>
<gene>
    <name evidence="1" type="primary">rpl13</name>
</gene>
<organism>
    <name type="scientific">Porphyra purpurea</name>
    <name type="common">Red seaweed</name>
    <name type="synonym">Ulva purpurea</name>
    <dbReference type="NCBI Taxonomy" id="2787"/>
    <lineage>
        <taxon>Eukaryota</taxon>
        <taxon>Rhodophyta</taxon>
        <taxon>Bangiophyceae</taxon>
        <taxon>Bangiales</taxon>
        <taxon>Bangiaceae</taxon>
        <taxon>Porphyra</taxon>
    </lineage>
</organism>
<proteinExistence type="inferred from homology"/>
<geneLocation type="chloroplast"/>
<feature type="chain" id="PRO_0000133768" description="Large ribosomal subunit protein uL13c">
    <location>
        <begin position="1"/>
        <end position="142"/>
    </location>
</feature>